<reference key="1">
    <citation type="journal article" date="2008" name="J. Biotechnol.">
        <title>The genome of Xanthomonas campestris pv. campestris B100 and its use for the reconstruction of metabolic pathways involved in xanthan biosynthesis.</title>
        <authorList>
            <person name="Vorhoelter F.-J."/>
            <person name="Schneiker S."/>
            <person name="Goesmann A."/>
            <person name="Krause L."/>
            <person name="Bekel T."/>
            <person name="Kaiser O."/>
            <person name="Linke B."/>
            <person name="Patschkowski T."/>
            <person name="Rueckert C."/>
            <person name="Schmid J."/>
            <person name="Sidhu V.K."/>
            <person name="Sieber V."/>
            <person name="Tauch A."/>
            <person name="Watt S.A."/>
            <person name="Weisshaar B."/>
            <person name="Becker A."/>
            <person name="Niehaus K."/>
            <person name="Puehler A."/>
        </authorList>
    </citation>
    <scope>NUCLEOTIDE SEQUENCE [LARGE SCALE GENOMIC DNA]</scope>
    <source>
        <strain>B100</strain>
    </source>
</reference>
<organism>
    <name type="scientific">Xanthomonas campestris pv. campestris (strain B100)</name>
    <dbReference type="NCBI Taxonomy" id="509169"/>
    <lineage>
        <taxon>Bacteria</taxon>
        <taxon>Pseudomonadati</taxon>
        <taxon>Pseudomonadota</taxon>
        <taxon>Gammaproteobacteria</taxon>
        <taxon>Lysobacterales</taxon>
        <taxon>Lysobacteraceae</taxon>
        <taxon>Xanthomonas</taxon>
    </lineage>
</organism>
<proteinExistence type="inferred from homology"/>
<keyword id="KW-0223">Dioxygenase</keyword>
<keyword id="KW-0408">Iron</keyword>
<keyword id="KW-0479">Metal-binding</keyword>
<keyword id="KW-0560">Oxidoreductase</keyword>
<keyword id="KW-0847">Vitamin C</keyword>
<comment type="cofactor">
    <cofactor evidence="1">
        <name>Fe(2+)</name>
        <dbReference type="ChEBI" id="CHEBI:29033"/>
    </cofactor>
    <text evidence="1">Binds 1 Fe(2+) ion per subunit.</text>
</comment>
<comment type="cofactor">
    <cofactor evidence="1">
        <name>L-ascorbate</name>
        <dbReference type="ChEBI" id="CHEBI:38290"/>
    </cofactor>
</comment>
<gene>
    <name type="ordered locus">xcc-b100_1388</name>
</gene>
<feature type="chain" id="PRO_0000346533" description="PKHD-type hydroxylase xcc-b100_1388">
    <location>
        <begin position="1"/>
        <end position="228"/>
    </location>
</feature>
<feature type="domain" description="Fe2OG dioxygenase" evidence="1">
    <location>
        <begin position="78"/>
        <end position="180"/>
    </location>
</feature>
<feature type="binding site" evidence="1">
    <location>
        <position position="96"/>
    </location>
    <ligand>
        <name>Fe cation</name>
        <dbReference type="ChEBI" id="CHEBI:24875"/>
    </ligand>
</feature>
<feature type="binding site" evidence="1">
    <location>
        <position position="98"/>
    </location>
    <ligand>
        <name>Fe cation</name>
        <dbReference type="ChEBI" id="CHEBI:24875"/>
    </ligand>
</feature>
<feature type="binding site" evidence="1">
    <location>
        <position position="161"/>
    </location>
    <ligand>
        <name>Fe cation</name>
        <dbReference type="ChEBI" id="CHEBI:24875"/>
    </ligand>
</feature>
<feature type="binding site" evidence="1">
    <location>
        <position position="171"/>
    </location>
    <ligand>
        <name>2-oxoglutarate</name>
        <dbReference type="ChEBI" id="CHEBI:16810"/>
    </ligand>
</feature>
<name>Y1388_XANCB</name>
<accession>B0RQK3</accession>
<evidence type="ECO:0000255" key="1">
    <source>
        <dbReference type="HAMAP-Rule" id="MF_00657"/>
    </source>
</evidence>
<protein>
    <recommendedName>
        <fullName evidence="1">PKHD-type hydroxylase xcc-b100_1388</fullName>
        <ecNumber evidence="1">1.14.11.-</ecNumber>
    </recommendedName>
</protein>
<dbReference type="EC" id="1.14.11.-" evidence="1"/>
<dbReference type="EMBL" id="AM920689">
    <property type="protein sequence ID" value="CAP50738.1"/>
    <property type="molecule type" value="Genomic_DNA"/>
</dbReference>
<dbReference type="SMR" id="B0RQK3"/>
<dbReference type="KEGG" id="xca:xcc-b100_1388"/>
<dbReference type="HOGENOM" id="CLU_106663_0_0_6"/>
<dbReference type="Proteomes" id="UP000001188">
    <property type="component" value="Chromosome"/>
</dbReference>
<dbReference type="GO" id="GO:0016706">
    <property type="term" value="F:2-oxoglutarate-dependent dioxygenase activity"/>
    <property type="evidence" value="ECO:0007669"/>
    <property type="project" value="UniProtKB-UniRule"/>
</dbReference>
<dbReference type="GO" id="GO:0005506">
    <property type="term" value="F:iron ion binding"/>
    <property type="evidence" value="ECO:0007669"/>
    <property type="project" value="UniProtKB-UniRule"/>
</dbReference>
<dbReference type="GO" id="GO:0031418">
    <property type="term" value="F:L-ascorbic acid binding"/>
    <property type="evidence" value="ECO:0007669"/>
    <property type="project" value="UniProtKB-KW"/>
</dbReference>
<dbReference type="GO" id="GO:0006974">
    <property type="term" value="P:DNA damage response"/>
    <property type="evidence" value="ECO:0007669"/>
    <property type="project" value="TreeGrafter"/>
</dbReference>
<dbReference type="GO" id="GO:0006879">
    <property type="term" value="P:intracellular iron ion homeostasis"/>
    <property type="evidence" value="ECO:0007669"/>
    <property type="project" value="TreeGrafter"/>
</dbReference>
<dbReference type="FunFam" id="2.60.120.620:FF:000006">
    <property type="entry name" value="PKHD-type hydroxylase YbiX"/>
    <property type="match status" value="1"/>
</dbReference>
<dbReference type="Gene3D" id="2.60.120.620">
    <property type="entry name" value="q2cbj1_9rhob like domain"/>
    <property type="match status" value="1"/>
</dbReference>
<dbReference type="Gene3D" id="4.10.860.20">
    <property type="entry name" value="Rabenosyn, Rab binding domain"/>
    <property type="match status" value="1"/>
</dbReference>
<dbReference type="HAMAP" id="MF_00657">
    <property type="entry name" value="Hydroxyl_YbiX"/>
    <property type="match status" value="1"/>
</dbReference>
<dbReference type="InterPro" id="IPR005123">
    <property type="entry name" value="Oxoglu/Fe-dep_dioxygenase_dom"/>
</dbReference>
<dbReference type="InterPro" id="IPR041097">
    <property type="entry name" value="PKHD_C"/>
</dbReference>
<dbReference type="InterPro" id="IPR023550">
    <property type="entry name" value="PKHD_hydroxylase"/>
</dbReference>
<dbReference type="InterPro" id="IPR006620">
    <property type="entry name" value="Pro_4_hyd_alph"/>
</dbReference>
<dbReference type="InterPro" id="IPR044862">
    <property type="entry name" value="Pro_4_hyd_alph_FE2OG_OXY"/>
</dbReference>
<dbReference type="NCBIfam" id="NF003973">
    <property type="entry name" value="PRK05467.1-2"/>
    <property type="match status" value="1"/>
</dbReference>
<dbReference type="NCBIfam" id="NF003974">
    <property type="entry name" value="PRK05467.1-3"/>
    <property type="match status" value="1"/>
</dbReference>
<dbReference type="NCBIfam" id="NF003975">
    <property type="entry name" value="PRK05467.1-4"/>
    <property type="match status" value="1"/>
</dbReference>
<dbReference type="PANTHER" id="PTHR41536">
    <property type="entry name" value="PKHD-TYPE HYDROXYLASE YBIX"/>
    <property type="match status" value="1"/>
</dbReference>
<dbReference type="PANTHER" id="PTHR41536:SF1">
    <property type="entry name" value="PKHD-TYPE HYDROXYLASE YBIX"/>
    <property type="match status" value="1"/>
</dbReference>
<dbReference type="Pfam" id="PF13640">
    <property type="entry name" value="2OG-FeII_Oxy_3"/>
    <property type="match status" value="1"/>
</dbReference>
<dbReference type="Pfam" id="PF18331">
    <property type="entry name" value="PKHD_C"/>
    <property type="match status" value="1"/>
</dbReference>
<dbReference type="SMART" id="SM00702">
    <property type="entry name" value="P4Hc"/>
    <property type="match status" value="1"/>
</dbReference>
<dbReference type="SUPFAM" id="SSF51197">
    <property type="entry name" value="Clavaminate synthase-like"/>
    <property type="match status" value="1"/>
</dbReference>
<dbReference type="PROSITE" id="PS51471">
    <property type="entry name" value="FE2OG_OXY"/>
    <property type="match status" value="1"/>
</dbReference>
<sequence length="228" mass="25290">MLLPIPDVLTPAQLSQLRERLDAADWADGRITAGHQSAQAKDNAQLPEDSPIAREASALVLDALSRSSTFFSAALPRRIYPPLFNRYSGGQSFGYHVDNAVRYDRSRGGADPVRTDVSATLFLSDPESYDGGELVIEDTYGTQSVKLPAGHLVIYPGTSLHKVMPVTRGTRVASFFWIQSMLRNDAQRRLLFELDVSIRRLTQDTPGHPSLIQLTGVYHNLLRQWADV</sequence>